<evidence type="ECO:0000255" key="1">
    <source>
        <dbReference type="HAMAP-Rule" id="MF_00115"/>
    </source>
</evidence>
<accession>B2S9G8</accession>
<gene>
    <name evidence="1" type="primary">mscL</name>
    <name type="ordered locus">BAbS19_I03180</name>
</gene>
<protein>
    <recommendedName>
        <fullName evidence="1">Large-conductance mechanosensitive channel</fullName>
    </recommendedName>
</protein>
<feature type="chain" id="PRO_1000094880" description="Large-conductance mechanosensitive channel">
    <location>
        <begin position="1"/>
        <end position="138"/>
    </location>
</feature>
<feature type="transmembrane region" description="Helical" evidence="1">
    <location>
        <begin position="15"/>
        <end position="35"/>
    </location>
</feature>
<feature type="transmembrane region" description="Helical" evidence="1">
    <location>
        <begin position="38"/>
        <end position="58"/>
    </location>
</feature>
<feature type="transmembrane region" description="Helical" evidence="1">
    <location>
        <begin position="80"/>
        <end position="100"/>
    </location>
</feature>
<comment type="function">
    <text evidence="1">Channel that opens in response to stretch forces in the membrane lipid bilayer. May participate in the regulation of osmotic pressure changes within the cell.</text>
</comment>
<comment type="subunit">
    <text evidence="1">Homopentamer.</text>
</comment>
<comment type="subcellular location">
    <subcellularLocation>
        <location evidence="1">Cell inner membrane</location>
        <topology evidence="1">Multi-pass membrane protein</topology>
    </subcellularLocation>
</comment>
<comment type="similarity">
    <text evidence="1">Belongs to the MscL family.</text>
</comment>
<organism>
    <name type="scientific">Brucella abortus (strain S19)</name>
    <dbReference type="NCBI Taxonomy" id="430066"/>
    <lineage>
        <taxon>Bacteria</taxon>
        <taxon>Pseudomonadati</taxon>
        <taxon>Pseudomonadota</taxon>
        <taxon>Alphaproteobacteria</taxon>
        <taxon>Hyphomicrobiales</taxon>
        <taxon>Brucellaceae</taxon>
        <taxon>Brucella/Ochrobactrum group</taxon>
        <taxon>Brucella</taxon>
    </lineage>
</organism>
<sequence length="138" mass="14899">MLKEFQEFALKGNMVDLAIGVIIGGAFGGLVNSIVNDIIMPIIGLITGGIDFSNMFIQLAGDPKTTLAAAREAGATIAYGNFITLLINFLIIAWVLFLVVKLMNRLKKREEAKPAPAAPSEEVLLTEIRDILAKQQKA</sequence>
<dbReference type="EMBL" id="CP000887">
    <property type="protein sequence ID" value="ACD71859.1"/>
    <property type="molecule type" value="Genomic_DNA"/>
</dbReference>
<dbReference type="RefSeq" id="WP_002963483.1">
    <property type="nucleotide sequence ID" value="NC_010742.1"/>
</dbReference>
<dbReference type="SMR" id="B2S9G8"/>
<dbReference type="GeneID" id="97534292"/>
<dbReference type="KEGG" id="bmc:BAbS19_I03180"/>
<dbReference type="HOGENOM" id="CLU_095787_0_1_5"/>
<dbReference type="Proteomes" id="UP000002565">
    <property type="component" value="Chromosome 1"/>
</dbReference>
<dbReference type="GO" id="GO:0005886">
    <property type="term" value="C:plasma membrane"/>
    <property type="evidence" value="ECO:0007669"/>
    <property type="project" value="UniProtKB-SubCell"/>
</dbReference>
<dbReference type="GO" id="GO:0008381">
    <property type="term" value="F:mechanosensitive monoatomic ion channel activity"/>
    <property type="evidence" value="ECO:0007669"/>
    <property type="project" value="UniProtKB-UniRule"/>
</dbReference>
<dbReference type="Gene3D" id="1.10.1200.120">
    <property type="entry name" value="Large-conductance mechanosensitive channel, MscL, domain 1"/>
    <property type="match status" value="1"/>
</dbReference>
<dbReference type="HAMAP" id="MF_00115">
    <property type="entry name" value="MscL"/>
    <property type="match status" value="1"/>
</dbReference>
<dbReference type="InterPro" id="IPR019823">
    <property type="entry name" value="Mechanosensitive_channel_CS"/>
</dbReference>
<dbReference type="InterPro" id="IPR001185">
    <property type="entry name" value="MS_channel"/>
</dbReference>
<dbReference type="InterPro" id="IPR037673">
    <property type="entry name" value="MSC/AndL"/>
</dbReference>
<dbReference type="InterPro" id="IPR036019">
    <property type="entry name" value="MscL_channel"/>
</dbReference>
<dbReference type="NCBIfam" id="TIGR00220">
    <property type="entry name" value="mscL"/>
    <property type="match status" value="1"/>
</dbReference>
<dbReference type="NCBIfam" id="NF001843">
    <property type="entry name" value="PRK00567.1-4"/>
    <property type="match status" value="1"/>
</dbReference>
<dbReference type="NCBIfam" id="NF010557">
    <property type="entry name" value="PRK13952.1"/>
    <property type="match status" value="1"/>
</dbReference>
<dbReference type="PANTHER" id="PTHR30266:SF2">
    <property type="entry name" value="LARGE-CONDUCTANCE MECHANOSENSITIVE CHANNEL"/>
    <property type="match status" value="1"/>
</dbReference>
<dbReference type="PANTHER" id="PTHR30266">
    <property type="entry name" value="MECHANOSENSITIVE CHANNEL MSCL"/>
    <property type="match status" value="1"/>
</dbReference>
<dbReference type="Pfam" id="PF01741">
    <property type="entry name" value="MscL"/>
    <property type="match status" value="1"/>
</dbReference>
<dbReference type="PRINTS" id="PR01264">
    <property type="entry name" value="MECHCHANNEL"/>
</dbReference>
<dbReference type="SUPFAM" id="SSF81330">
    <property type="entry name" value="Gated mechanosensitive channel"/>
    <property type="match status" value="1"/>
</dbReference>
<dbReference type="PROSITE" id="PS01327">
    <property type="entry name" value="MSCL"/>
    <property type="match status" value="1"/>
</dbReference>
<keyword id="KW-0997">Cell inner membrane</keyword>
<keyword id="KW-1003">Cell membrane</keyword>
<keyword id="KW-0407">Ion channel</keyword>
<keyword id="KW-0406">Ion transport</keyword>
<keyword id="KW-0472">Membrane</keyword>
<keyword id="KW-0812">Transmembrane</keyword>
<keyword id="KW-1133">Transmembrane helix</keyword>
<keyword id="KW-0813">Transport</keyword>
<reference key="1">
    <citation type="journal article" date="2008" name="PLoS ONE">
        <title>Genome sequence of Brucella abortus vaccine strain S19 compared to virulent strains yields candidate virulence genes.</title>
        <authorList>
            <person name="Crasta O.R."/>
            <person name="Folkerts O."/>
            <person name="Fei Z."/>
            <person name="Mane S.P."/>
            <person name="Evans C."/>
            <person name="Martino-Catt S."/>
            <person name="Bricker B."/>
            <person name="Yu G."/>
            <person name="Du L."/>
            <person name="Sobral B.W."/>
        </authorList>
    </citation>
    <scope>NUCLEOTIDE SEQUENCE [LARGE SCALE GENOMIC DNA]</scope>
    <source>
        <strain>S19</strain>
    </source>
</reference>
<name>MSCL_BRUA1</name>
<proteinExistence type="inferred from homology"/>